<reference key="1">
    <citation type="journal article" date="1999" name="Nature">
        <title>Genomic sequence comparison of two unrelated isolates of the human gastric pathogen Helicobacter pylori.</title>
        <authorList>
            <person name="Alm R.A."/>
            <person name="Ling L.-S.L."/>
            <person name="Moir D.T."/>
            <person name="King B.L."/>
            <person name="Brown E.D."/>
            <person name="Doig P.C."/>
            <person name="Smith D.R."/>
            <person name="Noonan B."/>
            <person name="Guild B.C."/>
            <person name="deJonge B.L."/>
            <person name="Carmel G."/>
            <person name="Tummino P.J."/>
            <person name="Caruso A."/>
            <person name="Uria-Nickelsen M."/>
            <person name="Mills D.M."/>
            <person name="Ives C."/>
            <person name="Gibson R."/>
            <person name="Merberg D."/>
            <person name="Mills S.D."/>
            <person name="Jiang Q."/>
            <person name="Taylor D.E."/>
            <person name="Vovis G.F."/>
            <person name="Trust T.J."/>
        </authorList>
    </citation>
    <scope>NUCLEOTIDE SEQUENCE [LARGE SCALE GENOMIC DNA]</scope>
    <source>
        <strain>J99 / ATCC 700824</strain>
    </source>
</reference>
<organism>
    <name type="scientific">Helicobacter pylori (strain J99 / ATCC 700824)</name>
    <name type="common">Campylobacter pylori J99</name>
    <dbReference type="NCBI Taxonomy" id="85963"/>
    <lineage>
        <taxon>Bacteria</taxon>
        <taxon>Pseudomonadati</taxon>
        <taxon>Campylobacterota</taxon>
        <taxon>Epsilonproteobacteria</taxon>
        <taxon>Campylobacterales</taxon>
        <taxon>Helicobacteraceae</taxon>
        <taxon>Helicobacter</taxon>
    </lineage>
</organism>
<comment type="function">
    <text evidence="1">May play a role in DNA repair. It seems to be involved in an RecBC-independent recombinational process of DNA repair. It may act with RecF and RecO.</text>
</comment>
<comment type="similarity">
    <text evidence="1">Belongs to the RecR family.</text>
</comment>
<proteinExistence type="inferred from homology"/>
<evidence type="ECO:0000255" key="1">
    <source>
        <dbReference type="HAMAP-Rule" id="MF_00017"/>
    </source>
</evidence>
<sequence>MNTYKNSLNHFLNLVDCLEKIPNVGKKSAFKMAYHLGLENPYLALKITHALRNALENLKTCASCNALSETEVSEICSDESRQNSQLCMVLHPRDVFILEDLKDFLGRYYVLNSIEDVDFNALEKRLIGENIKEIIFAFPPTLANDSLMLYIEDKLQHLHLTFTKIAQGVPTGVNFENIDSVSLSRAFNSRIKA</sequence>
<gene>
    <name evidence="1" type="primary">recR</name>
    <name type="ordered locus">jhp_0859</name>
</gene>
<accession>Q9ZKS6</accession>
<keyword id="KW-0227">DNA damage</keyword>
<keyword id="KW-0233">DNA recombination</keyword>
<keyword id="KW-0234">DNA repair</keyword>
<keyword id="KW-0479">Metal-binding</keyword>
<keyword id="KW-0862">Zinc</keyword>
<keyword id="KW-0863">Zinc-finger</keyword>
<dbReference type="EMBL" id="AE001439">
    <property type="protein sequence ID" value="AAD06442.1"/>
    <property type="molecule type" value="Genomic_DNA"/>
</dbReference>
<dbReference type="PIR" id="B71878">
    <property type="entry name" value="B71878"/>
</dbReference>
<dbReference type="RefSeq" id="WP_001099637.1">
    <property type="nucleotide sequence ID" value="NC_000921.1"/>
</dbReference>
<dbReference type="SMR" id="Q9ZKS6"/>
<dbReference type="KEGG" id="hpj:jhp_0859"/>
<dbReference type="eggNOG" id="COG0353">
    <property type="taxonomic scope" value="Bacteria"/>
</dbReference>
<dbReference type="Proteomes" id="UP000000804">
    <property type="component" value="Chromosome"/>
</dbReference>
<dbReference type="GO" id="GO:0003677">
    <property type="term" value="F:DNA binding"/>
    <property type="evidence" value="ECO:0007669"/>
    <property type="project" value="UniProtKB-UniRule"/>
</dbReference>
<dbReference type="GO" id="GO:0008270">
    <property type="term" value="F:zinc ion binding"/>
    <property type="evidence" value="ECO:0007669"/>
    <property type="project" value="UniProtKB-KW"/>
</dbReference>
<dbReference type="GO" id="GO:0006310">
    <property type="term" value="P:DNA recombination"/>
    <property type="evidence" value="ECO:0007669"/>
    <property type="project" value="UniProtKB-UniRule"/>
</dbReference>
<dbReference type="GO" id="GO:0006281">
    <property type="term" value="P:DNA repair"/>
    <property type="evidence" value="ECO:0007669"/>
    <property type="project" value="UniProtKB-UniRule"/>
</dbReference>
<dbReference type="CDD" id="cd01025">
    <property type="entry name" value="TOPRIM_recR"/>
    <property type="match status" value="1"/>
</dbReference>
<dbReference type="Gene3D" id="3.40.1360.10">
    <property type="match status" value="1"/>
</dbReference>
<dbReference type="Gene3D" id="1.10.8.420">
    <property type="entry name" value="RecR Domain 1"/>
    <property type="match status" value="1"/>
</dbReference>
<dbReference type="HAMAP" id="MF_00017">
    <property type="entry name" value="RecR"/>
    <property type="match status" value="1"/>
</dbReference>
<dbReference type="InterPro" id="IPR000093">
    <property type="entry name" value="DNA_Rcmb_RecR"/>
</dbReference>
<dbReference type="InterPro" id="IPR023627">
    <property type="entry name" value="Rcmb_RecR"/>
</dbReference>
<dbReference type="InterPro" id="IPR006171">
    <property type="entry name" value="TOPRIM_dom"/>
</dbReference>
<dbReference type="InterPro" id="IPR034137">
    <property type="entry name" value="TOPRIM_RecR"/>
</dbReference>
<dbReference type="NCBIfam" id="TIGR00615">
    <property type="entry name" value="recR"/>
    <property type="match status" value="1"/>
</dbReference>
<dbReference type="PANTHER" id="PTHR30446">
    <property type="entry name" value="RECOMBINATION PROTEIN RECR"/>
    <property type="match status" value="1"/>
</dbReference>
<dbReference type="PANTHER" id="PTHR30446:SF0">
    <property type="entry name" value="RECOMBINATION PROTEIN RECR"/>
    <property type="match status" value="1"/>
</dbReference>
<dbReference type="Pfam" id="PF21176">
    <property type="entry name" value="RecR_HhH"/>
    <property type="match status" value="1"/>
</dbReference>
<dbReference type="SUPFAM" id="SSF111304">
    <property type="entry name" value="Recombination protein RecR"/>
    <property type="match status" value="1"/>
</dbReference>
<dbReference type="PROSITE" id="PS50880">
    <property type="entry name" value="TOPRIM"/>
    <property type="match status" value="1"/>
</dbReference>
<protein>
    <recommendedName>
        <fullName evidence="1">Recombination protein RecR</fullName>
    </recommendedName>
</protein>
<feature type="chain" id="PRO_0000190331" description="Recombination protein RecR">
    <location>
        <begin position="1"/>
        <end position="193"/>
    </location>
</feature>
<feature type="domain" description="Toprim" evidence="1">
    <location>
        <begin position="84"/>
        <end position="170"/>
    </location>
</feature>
<feature type="zinc finger region" description="C4-type; degenerate" evidence="1">
    <location>
        <begin position="61"/>
        <end position="76"/>
    </location>
</feature>
<name>RECR_HELPJ</name>